<evidence type="ECO:0000250" key="1"/>
<evidence type="ECO:0000250" key="2">
    <source>
        <dbReference type="UniProtKB" id="P08010"/>
    </source>
</evidence>
<evidence type="ECO:0000250" key="3">
    <source>
        <dbReference type="UniProtKB" id="P28161"/>
    </source>
</evidence>
<evidence type="ECO:0000269" key="4">
    <source>
    </source>
</evidence>
<evidence type="ECO:0000305" key="5"/>
<evidence type="ECO:0000312" key="6">
    <source>
        <dbReference type="MGI" id="MGI:95861"/>
    </source>
</evidence>
<evidence type="ECO:0007744" key="7">
    <source>
    </source>
</evidence>
<feature type="initiator methionine" description="Removed" evidence="4">
    <location>
        <position position="1"/>
    </location>
</feature>
<feature type="chain" id="PRO_0000185827" description="Glutathione S-transferase Mu 2">
    <location>
        <begin position="2"/>
        <end position="218"/>
    </location>
</feature>
<feature type="domain" description="GST N-terminal">
    <location>
        <begin position="2"/>
        <end position="88"/>
    </location>
</feature>
<feature type="domain" description="GST C-terminal">
    <location>
        <begin position="90"/>
        <end position="208"/>
    </location>
</feature>
<feature type="binding site" evidence="2">
    <location>
        <begin position="7"/>
        <end position="8"/>
    </location>
    <ligand>
        <name>glutathione</name>
        <dbReference type="ChEBI" id="CHEBI:57925"/>
    </ligand>
</feature>
<feature type="binding site" evidence="2">
    <location>
        <begin position="43"/>
        <end position="46"/>
    </location>
    <ligand>
        <name>glutathione</name>
        <dbReference type="ChEBI" id="CHEBI:57925"/>
    </ligand>
</feature>
<feature type="binding site" evidence="2">
    <location>
        <position position="50"/>
    </location>
    <ligand>
        <name>glutathione</name>
        <dbReference type="ChEBI" id="CHEBI:57925"/>
    </ligand>
</feature>
<feature type="binding site" evidence="2">
    <location>
        <begin position="59"/>
        <end position="60"/>
    </location>
    <ligand>
        <name>glutathione</name>
        <dbReference type="ChEBI" id="CHEBI:57925"/>
    </ligand>
</feature>
<feature type="binding site" evidence="2">
    <location>
        <begin position="72"/>
        <end position="73"/>
    </location>
    <ligand>
        <name>glutathione</name>
        <dbReference type="ChEBI" id="CHEBI:57925"/>
    </ligand>
</feature>
<feature type="binding site" evidence="1">
    <location>
        <position position="116"/>
    </location>
    <ligand>
        <name>substrate</name>
    </ligand>
</feature>
<feature type="modified residue" description="Phosphoserine" evidence="2">
    <location>
        <position position="27"/>
    </location>
</feature>
<feature type="modified residue" description="Phosphoserine" evidence="2">
    <location>
        <position position="44"/>
    </location>
</feature>
<feature type="modified residue" description="Phosphoserine" evidence="7">
    <location>
        <position position="117"/>
    </location>
</feature>
<name>GSTM2_MOUSE</name>
<proteinExistence type="evidence at protein level"/>
<sequence>MPMTLGYWDIRGLAHAIRLLLEYTDTSYEDKKYTMGDAPDYDRSQWLSEKFKLGLDFPNLPYLIDGSHKITQSNAILRYLARKHNLCGETEEERIRVDILENQAMDTRIQLAMVCYSPDFEKKKPEYLEGLPEKMKLYSEFLGKQPWFAGNKVTYVDFLVYDVLDQHRIFEPKCLDAFPNLKDFMGRFEGLKKISDYMKSSRFLSKPIFAKMAFWNPK</sequence>
<comment type="function">
    <text evidence="3">Conjugation of reduced glutathione to a wide number of exogenous and endogenous hydrophobic electrophiles. Participates in the formation of novel hepoxilin regioisomers.</text>
</comment>
<comment type="catalytic activity">
    <reaction evidence="3">
        <text>RX + glutathione = an S-substituted glutathione + a halide anion + H(+)</text>
        <dbReference type="Rhea" id="RHEA:16437"/>
        <dbReference type="ChEBI" id="CHEBI:15378"/>
        <dbReference type="ChEBI" id="CHEBI:16042"/>
        <dbReference type="ChEBI" id="CHEBI:17792"/>
        <dbReference type="ChEBI" id="CHEBI:57925"/>
        <dbReference type="ChEBI" id="CHEBI:90779"/>
        <dbReference type="EC" id="2.5.1.18"/>
    </reaction>
    <physiologicalReaction direction="left-to-right" evidence="3">
        <dbReference type="Rhea" id="RHEA:16438"/>
    </physiologicalReaction>
</comment>
<comment type="catalytic activity">
    <reaction evidence="3">
        <text>11(S)-hydroxy-14(S),15(S)-epoxy-(5Z,8Z,12E)-eicosatrienoate + glutathione = (11S,15S)-dihydroxy-14(R)-S-glutathionyl-(5Z,8Z,12E)-eicosatrienoate</text>
        <dbReference type="Rhea" id="RHEA:50260"/>
        <dbReference type="ChEBI" id="CHEBI:57925"/>
        <dbReference type="ChEBI" id="CHEBI:132200"/>
        <dbReference type="ChEBI" id="CHEBI:132201"/>
    </reaction>
    <physiologicalReaction direction="left-to-right" evidence="3">
        <dbReference type="Rhea" id="RHEA:50261"/>
    </physiologicalReaction>
</comment>
<comment type="subunit">
    <text>Homodimer.</text>
</comment>
<comment type="subcellular location">
    <subcellularLocation>
        <location>Cytoplasm</location>
    </subcellularLocation>
</comment>
<comment type="similarity">
    <text evidence="5">Belongs to the GST superfamily. Mu family.</text>
</comment>
<protein>
    <recommendedName>
        <fullName evidence="5">Glutathione S-transferase Mu 2</fullName>
        <ecNumber evidence="3">2.5.1.18</ecNumber>
    </recommendedName>
    <alternativeName>
        <fullName>GST 5-5</fullName>
    </alternativeName>
    <alternativeName>
        <fullName>GST class-mu 2</fullName>
    </alternativeName>
    <alternativeName>
        <fullName>Glutathione S-transferase pmGT2</fullName>
    </alternativeName>
</protein>
<dbReference type="EC" id="2.5.1.18" evidence="3"/>
<dbReference type="EMBL" id="J04696">
    <property type="protein sequence ID" value="AAA37706.1"/>
    <property type="molecule type" value="mRNA"/>
</dbReference>
<dbReference type="EMBL" id="AF319526">
    <property type="protein sequence ID" value="AAK28508.1"/>
    <property type="molecule type" value="Genomic_DNA"/>
</dbReference>
<dbReference type="EMBL" id="BC037068">
    <property type="protein sequence ID" value="AAH37068.1"/>
    <property type="molecule type" value="mRNA"/>
</dbReference>
<dbReference type="CCDS" id="CCDS17746.1"/>
<dbReference type="PIR" id="B34159">
    <property type="entry name" value="B34159"/>
</dbReference>
<dbReference type="RefSeq" id="NP_032209.1">
    <property type="nucleotide sequence ID" value="NM_008183.4"/>
</dbReference>
<dbReference type="SMR" id="P15626"/>
<dbReference type="BioGRID" id="200095">
    <property type="interactions" value="4"/>
</dbReference>
<dbReference type="FunCoup" id="P15626">
    <property type="interactions" value="266"/>
</dbReference>
<dbReference type="IntAct" id="P15626">
    <property type="interactions" value="2"/>
</dbReference>
<dbReference type="STRING" id="10090.ENSMUSP00000012348"/>
<dbReference type="GlyGen" id="P15626">
    <property type="glycosylation" value="1 site, 1 O-linked glycan (1 site)"/>
</dbReference>
<dbReference type="iPTMnet" id="P15626"/>
<dbReference type="PhosphoSitePlus" id="P15626"/>
<dbReference type="SwissPalm" id="P15626"/>
<dbReference type="REPRODUCTION-2DPAGE" id="IPI00228820"/>
<dbReference type="REPRODUCTION-2DPAGE" id="P15626"/>
<dbReference type="jPOST" id="P15626"/>
<dbReference type="PaxDb" id="10090-ENSMUSP00000012348"/>
<dbReference type="PeptideAtlas" id="P15626"/>
<dbReference type="ProteomicsDB" id="271342"/>
<dbReference type="Pumba" id="P15626"/>
<dbReference type="DNASU" id="14863"/>
<dbReference type="Ensembl" id="ENSMUST00000012348.9">
    <property type="protein sequence ID" value="ENSMUSP00000012348.3"/>
    <property type="gene ID" value="ENSMUSG00000040562.13"/>
</dbReference>
<dbReference type="GeneID" id="14863"/>
<dbReference type="KEGG" id="mmu:14863"/>
<dbReference type="UCSC" id="uc008qxw.1">
    <property type="organism name" value="mouse"/>
</dbReference>
<dbReference type="AGR" id="MGI:95861"/>
<dbReference type="CTD" id="2946"/>
<dbReference type="MGI" id="MGI:95861">
    <property type="gene designation" value="Gstm2"/>
</dbReference>
<dbReference type="VEuPathDB" id="HostDB:ENSMUSG00000040562"/>
<dbReference type="eggNOG" id="KOG1695">
    <property type="taxonomic scope" value="Eukaryota"/>
</dbReference>
<dbReference type="GeneTree" id="ENSGT00940000160258"/>
<dbReference type="HOGENOM" id="CLU_039475_2_0_1"/>
<dbReference type="InParanoid" id="P15626"/>
<dbReference type="OMA" id="EEWFGEV"/>
<dbReference type="OrthoDB" id="4951845at2759"/>
<dbReference type="PhylomeDB" id="P15626"/>
<dbReference type="TreeFam" id="TF353040"/>
<dbReference type="Reactome" id="R-MMU-156590">
    <property type="pathway name" value="Glutathione conjugation"/>
</dbReference>
<dbReference type="Reactome" id="R-MMU-9748787">
    <property type="pathway name" value="Azathioprine ADME"/>
</dbReference>
<dbReference type="Reactome" id="R-MMU-9753281">
    <property type="pathway name" value="Paracetamol ADME"/>
</dbReference>
<dbReference type="BioGRID-ORCS" id="14863">
    <property type="hits" value="3 hits in 77 CRISPR screens"/>
</dbReference>
<dbReference type="ChiTaRS" id="Gstm2">
    <property type="organism name" value="mouse"/>
</dbReference>
<dbReference type="PRO" id="PR:P15626"/>
<dbReference type="Proteomes" id="UP000000589">
    <property type="component" value="Chromosome 3"/>
</dbReference>
<dbReference type="RNAct" id="P15626">
    <property type="molecule type" value="protein"/>
</dbReference>
<dbReference type="Bgee" id="ENSMUSG00000040562">
    <property type="expression patterns" value="Expressed in uterus and 134 other cell types or tissues"/>
</dbReference>
<dbReference type="ExpressionAtlas" id="P15626">
    <property type="expression patterns" value="baseline and differential"/>
</dbReference>
<dbReference type="GO" id="GO:0005829">
    <property type="term" value="C:cytosol"/>
    <property type="evidence" value="ECO:0000314"/>
    <property type="project" value="FlyBase"/>
</dbReference>
<dbReference type="GO" id="GO:0005739">
    <property type="term" value="C:mitochondrion"/>
    <property type="evidence" value="ECO:0000314"/>
    <property type="project" value="FlyBase"/>
</dbReference>
<dbReference type="GO" id="GO:0004364">
    <property type="term" value="F:glutathione transferase activity"/>
    <property type="evidence" value="ECO:0000314"/>
    <property type="project" value="MGI"/>
</dbReference>
<dbReference type="GO" id="GO:0042802">
    <property type="term" value="F:identical protein binding"/>
    <property type="evidence" value="ECO:0000353"/>
    <property type="project" value="MGI"/>
</dbReference>
<dbReference type="GO" id="GO:0051122">
    <property type="term" value="P:hepoxilin biosynthetic process"/>
    <property type="evidence" value="ECO:0000250"/>
    <property type="project" value="UniProtKB"/>
</dbReference>
<dbReference type="CDD" id="cd03209">
    <property type="entry name" value="GST_C_Mu"/>
    <property type="match status" value="1"/>
</dbReference>
<dbReference type="CDD" id="cd03075">
    <property type="entry name" value="GST_N_Mu"/>
    <property type="match status" value="1"/>
</dbReference>
<dbReference type="FunFam" id="1.20.1050.10:FF:000083">
    <property type="entry name" value="Glutathione S-transferase Mu 1"/>
    <property type="match status" value="1"/>
</dbReference>
<dbReference type="FunFam" id="3.40.30.10:FF:000603">
    <property type="entry name" value="Glutathione S-transferase Mu 1"/>
    <property type="match status" value="1"/>
</dbReference>
<dbReference type="Gene3D" id="1.20.1050.10">
    <property type="match status" value="1"/>
</dbReference>
<dbReference type="Gene3D" id="3.40.30.10">
    <property type="entry name" value="Glutaredoxin"/>
    <property type="match status" value="1"/>
</dbReference>
<dbReference type="InterPro" id="IPR010987">
    <property type="entry name" value="Glutathione-S-Trfase_C-like"/>
</dbReference>
<dbReference type="InterPro" id="IPR036282">
    <property type="entry name" value="Glutathione-S-Trfase_C_sf"/>
</dbReference>
<dbReference type="InterPro" id="IPR040079">
    <property type="entry name" value="Glutathione_S-Trfase"/>
</dbReference>
<dbReference type="InterPro" id="IPR004045">
    <property type="entry name" value="Glutathione_S-Trfase_N"/>
</dbReference>
<dbReference type="InterPro" id="IPR004046">
    <property type="entry name" value="GST_C"/>
</dbReference>
<dbReference type="InterPro" id="IPR003081">
    <property type="entry name" value="GST_mu"/>
</dbReference>
<dbReference type="InterPro" id="IPR050213">
    <property type="entry name" value="GST_superfamily"/>
</dbReference>
<dbReference type="InterPro" id="IPR036249">
    <property type="entry name" value="Thioredoxin-like_sf"/>
</dbReference>
<dbReference type="PANTHER" id="PTHR11571">
    <property type="entry name" value="GLUTATHIONE S-TRANSFERASE"/>
    <property type="match status" value="1"/>
</dbReference>
<dbReference type="PANTHER" id="PTHR11571:SF271">
    <property type="entry name" value="GLUTATHIONE S-TRANSFERASE MU 2"/>
    <property type="match status" value="1"/>
</dbReference>
<dbReference type="Pfam" id="PF00043">
    <property type="entry name" value="GST_C"/>
    <property type="match status" value="1"/>
</dbReference>
<dbReference type="Pfam" id="PF02798">
    <property type="entry name" value="GST_N"/>
    <property type="match status" value="1"/>
</dbReference>
<dbReference type="PRINTS" id="PR01267">
    <property type="entry name" value="GSTRNSFRASEM"/>
</dbReference>
<dbReference type="SFLD" id="SFLDG01205">
    <property type="entry name" value="AMPS.1"/>
    <property type="match status" value="1"/>
</dbReference>
<dbReference type="SFLD" id="SFLDS00019">
    <property type="entry name" value="Glutathione_Transferase_(cytos"/>
    <property type="match status" value="1"/>
</dbReference>
<dbReference type="SUPFAM" id="SSF47616">
    <property type="entry name" value="GST C-terminal domain-like"/>
    <property type="match status" value="1"/>
</dbReference>
<dbReference type="SUPFAM" id="SSF52833">
    <property type="entry name" value="Thioredoxin-like"/>
    <property type="match status" value="1"/>
</dbReference>
<dbReference type="PROSITE" id="PS50405">
    <property type="entry name" value="GST_CTER"/>
    <property type="match status" value="1"/>
</dbReference>
<dbReference type="PROSITE" id="PS50404">
    <property type="entry name" value="GST_NTER"/>
    <property type="match status" value="1"/>
</dbReference>
<organism>
    <name type="scientific">Mus musculus</name>
    <name type="common">Mouse</name>
    <dbReference type="NCBI Taxonomy" id="10090"/>
    <lineage>
        <taxon>Eukaryota</taxon>
        <taxon>Metazoa</taxon>
        <taxon>Chordata</taxon>
        <taxon>Craniata</taxon>
        <taxon>Vertebrata</taxon>
        <taxon>Euteleostomi</taxon>
        <taxon>Mammalia</taxon>
        <taxon>Eutheria</taxon>
        <taxon>Euarchontoglires</taxon>
        <taxon>Glires</taxon>
        <taxon>Rodentia</taxon>
        <taxon>Myomorpha</taxon>
        <taxon>Muroidea</taxon>
        <taxon>Muridae</taxon>
        <taxon>Murinae</taxon>
        <taxon>Mus</taxon>
        <taxon>Mus</taxon>
    </lineage>
</organism>
<reference key="1">
    <citation type="journal article" date="1989" name="J. Biol. Chem.">
        <title>Isolation, characterization, and expression in Escherichia coli of two murine Mu class glutathione S-transferase cDNAs homologous to the rat subunits 3 (Yb1) and 4 (Yb2).</title>
        <authorList>
            <person name="Townsend A.J."/>
            <person name="Goldsmith M.E."/>
            <person name="Pickett C.B."/>
            <person name="Cowan K.H."/>
        </authorList>
    </citation>
    <scope>NUCLEOTIDE SEQUENCE [MRNA]</scope>
</reference>
<reference key="2">
    <citation type="journal article" date="2001" name="Gene">
        <title>Genomic organization and characterization of the promoter region of murine GSTM2 gene.</title>
        <authorList>
            <person name="Kumar A."/>
            <person name="Reddy E.P."/>
        </authorList>
    </citation>
    <scope>NUCLEOTIDE SEQUENCE [GENOMIC DNA]</scope>
    <source>
        <strain>129/SvJ</strain>
    </source>
</reference>
<reference key="3">
    <citation type="journal article" date="2004" name="Genome Res.">
        <title>The status, quality, and expansion of the NIH full-length cDNA project: the Mammalian Gene Collection (MGC).</title>
        <authorList>
            <consortium name="The MGC Project Team"/>
        </authorList>
    </citation>
    <scope>NUCLEOTIDE SEQUENCE [LARGE SCALE MRNA]</scope>
    <source>
        <strain>FVB/N</strain>
        <tissue>Colon</tissue>
    </source>
</reference>
<reference key="4">
    <citation type="journal article" date="1993" name="Arch. Biochem. Biophys.">
        <title>Purification and characterization of glutathione S-transferase of murine ovary and testis.</title>
        <authorList>
            <person name="Awasthi S."/>
            <person name="Singhal S.S."/>
            <person name="Srivastava S.K."/>
            <person name="Awasthi Y.C."/>
        </authorList>
    </citation>
    <scope>PROTEIN SEQUENCE OF 2-25</scope>
</reference>
<reference key="5">
    <citation type="journal article" date="2010" name="Cell">
        <title>A tissue-specific atlas of mouse protein phosphorylation and expression.</title>
        <authorList>
            <person name="Huttlin E.L."/>
            <person name="Jedrychowski M.P."/>
            <person name="Elias J.E."/>
            <person name="Goswami T."/>
            <person name="Rad R."/>
            <person name="Beausoleil S.A."/>
            <person name="Villen J."/>
            <person name="Haas W."/>
            <person name="Sowa M.E."/>
            <person name="Gygi S.P."/>
        </authorList>
    </citation>
    <scope>PHOSPHORYLATION [LARGE SCALE ANALYSIS] AT SER-117</scope>
    <scope>IDENTIFICATION BY MASS SPECTROMETRY [LARGE SCALE ANALYSIS]</scope>
    <source>
        <tissue>Brain</tissue>
        <tissue>Brown adipose tissue</tissue>
        <tissue>Heart</tissue>
        <tissue>Kidney</tissue>
        <tissue>Liver</tissue>
        <tissue>Lung</tissue>
        <tissue>Pancreas</tissue>
        <tissue>Spleen</tissue>
        <tissue>Testis</tissue>
    </source>
</reference>
<gene>
    <name evidence="6" type="primary">Gstm2</name>
</gene>
<accession>P15626</accession>
<keyword id="KW-0963">Cytoplasm</keyword>
<keyword id="KW-0903">Direct protein sequencing</keyword>
<keyword id="KW-0443">Lipid metabolism</keyword>
<keyword id="KW-0597">Phosphoprotein</keyword>
<keyword id="KW-1185">Reference proteome</keyword>
<keyword id="KW-0808">Transferase</keyword>